<accession>G3UVW3</accession>
<accession>B2RXN5</accession>
<dbReference type="EMBL" id="AC159813">
    <property type="status" value="NOT_ANNOTATED_CDS"/>
    <property type="molecule type" value="Genomic_DNA"/>
</dbReference>
<dbReference type="EMBL" id="CH466526">
    <property type="protein sequence ID" value="EDL36510.1"/>
    <property type="molecule type" value="Genomic_DNA"/>
</dbReference>
<dbReference type="EMBL" id="BC157917">
    <property type="protein sequence ID" value="AAI57918.1"/>
    <property type="molecule type" value="mRNA"/>
</dbReference>
<dbReference type="EMBL" id="BC157928">
    <property type="protein sequence ID" value="AAI57929.1"/>
    <property type="molecule type" value="mRNA"/>
</dbReference>
<dbReference type="CCDS" id="CCDS49088.1"/>
<dbReference type="RefSeq" id="NP_001032806.2">
    <property type="nucleotide sequence ID" value="NM_001037717.3"/>
</dbReference>
<dbReference type="SMR" id="G3UVW3"/>
<dbReference type="FunCoup" id="G3UVW3">
    <property type="interactions" value="367"/>
</dbReference>
<dbReference type="STRING" id="10090.ENSMUSP00000120810"/>
<dbReference type="iPTMnet" id="G3UVW3"/>
<dbReference type="PhosphoSitePlus" id="G3UVW3"/>
<dbReference type="PaxDb" id="10090-ENSMUSP00000120810"/>
<dbReference type="ProteomicsDB" id="256681"/>
<dbReference type="Antibodypedia" id="11535">
    <property type="antibodies" value="33 antibodies from 10 providers"/>
</dbReference>
<dbReference type="Ensembl" id="ENSMUST00000140523.8">
    <property type="protein sequence ID" value="ENSMUSP00000120810.2"/>
    <property type="gene ID" value="ENSMUSG00000044712.16"/>
</dbReference>
<dbReference type="GeneID" id="625098"/>
<dbReference type="KEGG" id="mmu:625098"/>
<dbReference type="UCSC" id="uc011yns.2">
    <property type="organism name" value="mouse"/>
</dbReference>
<dbReference type="AGR" id="MGI:3648156"/>
<dbReference type="CTD" id="145389"/>
<dbReference type="MGI" id="MGI:3648156">
    <property type="gene designation" value="Slc38a6"/>
</dbReference>
<dbReference type="VEuPathDB" id="HostDB:ENSMUSG00000044712"/>
<dbReference type="eggNOG" id="KOG1305">
    <property type="taxonomic scope" value="Eukaryota"/>
</dbReference>
<dbReference type="GeneTree" id="ENSGT00940000156982"/>
<dbReference type="HOGENOM" id="CLU_009020_0_0_1"/>
<dbReference type="InParanoid" id="G3UVW3"/>
<dbReference type="OMA" id="KARMQNV"/>
<dbReference type="OrthoDB" id="28208at2759"/>
<dbReference type="PhylomeDB" id="G3UVW3"/>
<dbReference type="TreeFam" id="TF328787"/>
<dbReference type="BioGRID-ORCS" id="625098">
    <property type="hits" value="0 hits in 77 CRISPR screens"/>
</dbReference>
<dbReference type="ChiTaRS" id="Slc38a6">
    <property type="organism name" value="mouse"/>
</dbReference>
<dbReference type="PRO" id="PR:G3UVW3"/>
<dbReference type="Proteomes" id="UP000000589">
    <property type="component" value="Chromosome 12"/>
</dbReference>
<dbReference type="RNAct" id="G3UVW3">
    <property type="molecule type" value="protein"/>
</dbReference>
<dbReference type="Bgee" id="ENSMUSG00000044712">
    <property type="expression patterns" value="Expressed in blastoderm cell in morula and 228 other cell types or tissues"/>
</dbReference>
<dbReference type="ExpressionAtlas" id="G3UVW3">
    <property type="expression patterns" value="baseline and differential"/>
</dbReference>
<dbReference type="GO" id="GO:0005886">
    <property type="term" value="C:plasma membrane"/>
    <property type="evidence" value="ECO:0000314"/>
    <property type="project" value="UniProtKB"/>
</dbReference>
<dbReference type="GO" id="GO:0045202">
    <property type="term" value="C:synapse"/>
    <property type="evidence" value="ECO:0007669"/>
    <property type="project" value="UniProtKB-SubCell"/>
</dbReference>
<dbReference type="GO" id="GO:0005313">
    <property type="term" value="F:L-glutamate transmembrane transporter activity"/>
    <property type="evidence" value="ECO:0000314"/>
    <property type="project" value="UniProtKB"/>
</dbReference>
<dbReference type="GO" id="GO:0015186">
    <property type="term" value="F:L-glutamine transmembrane transporter activity"/>
    <property type="evidence" value="ECO:0000314"/>
    <property type="project" value="UniProtKB"/>
</dbReference>
<dbReference type="InterPro" id="IPR013057">
    <property type="entry name" value="AA_transpt_TM"/>
</dbReference>
<dbReference type="PANTHER" id="PTHR22950">
    <property type="entry name" value="AMINO ACID TRANSPORTER"/>
    <property type="match status" value="1"/>
</dbReference>
<dbReference type="PANTHER" id="PTHR22950:SF366">
    <property type="entry name" value="SODIUM-COUPLED NEUTRAL AMINO ACID TRANSPORTER 6-RELATED"/>
    <property type="match status" value="1"/>
</dbReference>
<dbReference type="Pfam" id="PF01490">
    <property type="entry name" value="Aa_trans"/>
    <property type="match status" value="1"/>
</dbReference>
<name>S38A6_MOUSE</name>
<proteinExistence type="evidence at protein level"/>
<feature type="chain" id="PRO_0000434577" description="Solute carrier family 38 member 6">
    <location>
        <begin position="1"/>
        <end position="457"/>
    </location>
</feature>
<feature type="transmembrane region" description="Helical" evidence="2">
    <location>
        <begin position="48"/>
        <end position="68"/>
    </location>
</feature>
<feature type="transmembrane region" description="Helical" evidence="2">
    <location>
        <begin position="70"/>
        <end position="90"/>
    </location>
</feature>
<feature type="transmembrane region" description="Helical" evidence="2">
    <location>
        <begin position="112"/>
        <end position="132"/>
    </location>
</feature>
<feature type="transmembrane region" description="Helical" evidence="2">
    <location>
        <begin position="171"/>
        <end position="191"/>
    </location>
</feature>
<feature type="transmembrane region" description="Helical" evidence="2">
    <location>
        <begin position="192"/>
        <end position="212"/>
    </location>
</feature>
<feature type="transmembrane region" description="Helical" evidence="2">
    <location>
        <begin position="251"/>
        <end position="271"/>
    </location>
</feature>
<feature type="transmembrane region" description="Helical" evidence="2">
    <location>
        <begin position="289"/>
        <end position="309"/>
    </location>
</feature>
<feature type="transmembrane region" description="Helical" evidence="2">
    <location>
        <begin position="328"/>
        <end position="348"/>
    </location>
</feature>
<feature type="transmembrane region" description="Helical" evidence="2">
    <location>
        <begin position="372"/>
        <end position="392"/>
    </location>
</feature>
<feature type="transmembrane region" description="Helical" evidence="2">
    <location>
        <begin position="395"/>
        <end position="415"/>
    </location>
</feature>
<feature type="transmembrane region" description="Helical" evidence="2">
    <location>
        <begin position="432"/>
        <end position="452"/>
    </location>
</feature>
<feature type="modified residue" description="N-acetylmethionine" evidence="1">
    <location>
        <position position="1"/>
    </location>
</feature>
<feature type="modified residue" description="Phosphoserine" evidence="1">
    <location>
        <position position="4"/>
    </location>
</feature>
<feature type="modified residue" description="Phosphoserine" evidence="9">
    <location>
        <position position="7"/>
    </location>
</feature>
<feature type="disulfide bond" evidence="3">
    <location>
        <begin position="219"/>
        <end position="239"/>
    </location>
</feature>
<feature type="sequence conflict" description="In Ref. 3; AAI57918/AAI57929." evidence="7" ref="3">
    <original>A</original>
    <variation>V</variation>
    <location>
        <position position="345"/>
    </location>
</feature>
<sequence length="457" mass="50253">MQASRHSIQAEPGWYVSAQQPEEAVAADEWSPLLSNEPHRQGSSGASFGLSVFNVMNAIMGSGILGLAYVMANTGILGFSFLLLFVALLASYSVHLLLAMCIHTAVTSYEDLGLFAFGLPGKVVVAGTIIIQNIGAMSSYLLIIKTELPAAISEFLPSDHSGSWYLDGQMLLIIICVGIVFPLSLLPKIGFLGYTSSLSFFFMVFFALVVVIKKWAVPCPVTLDCINEVFQISNATDDCKPKLFHFSKESVYAIPTMAFSFLCHTSVLPIYCELQSPSKKRMQNVTNTAIALSFLVYFVSALFGYLTFYDKVESELLQGYSKYLPHDVIVMAVKLCILFAVLLTAPLIHFPARKALMMILFSNYPFSWIRHSLTTAALNAIIVVLAIYVPDIRNVFGVVGASTSTCLIFVFPGLFYLKLSREDFLSWKKLGALFLLLTGAVVGSFSLVLIIFDWVNK</sequence>
<evidence type="ECO:0000250" key="1">
    <source>
        <dbReference type="UniProtKB" id="Q8IZM9"/>
    </source>
</evidence>
<evidence type="ECO:0000255" key="2"/>
<evidence type="ECO:0000255" key="3">
    <source>
        <dbReference type="PROSITE-ProRule" id="PRU00114"/>
    </source>
</evidence>
<evidence type="ECO:0000269" key="4">
    <source>
    </source>
</evidence>
<evidence type="ECO:0000269" key="5">
    <source>
    </source>
</evidence>
<evidence type="ECO:0000303" key="6">
    <source>
    </source>
</evidence>
<evidence type="ECO:0000305" key="7"/>
<evidence type="ECO:0000312" key="8">
    <source>
        <dbReference type="MGI" id="MGI:3648156"/>
    </source>
</evidence>
<evidence type="ECO:0007744" key="9">
    <source>
    </source>
</evidence>
<protein>
    <recommendedName>
        <fullName>Solute carrier family 38 member 6</fullName>
    </recommendedName>
    <alternativeName>
        <fullName>Amino acid transporter SLC38A6</fullName>
    </alternativeName>
</protein>
<keyword id="KW-0007">Acetylation</keyword>
<keyword id="KW-0029">Amino-acid transport</keyword>
<keyword id="KW-1003">Cell membrane</keyword>
<keyword id="KW-1015">Disulfide bond</keyword>
<keyword id="KW-0472">Membrane</keyword>
<keyword id="KW-0597">Phosphoprotein</keyword>
<keyword id="KW-1185">Reference proteome</keyword>
<keyword id="KW-0770">Synapse</keyword>
<keyword id="KW-0812">Transmembrane</keyword>
<keyword id="KW-1133">Transmembrane helix</keyword>
<keyword id="KW-0813">Transport</keyword>
<comment type="function">
    <text evidence="5">Amino acid transporter with an apparent selectivity for L-glutamine and L-glutamate. May facilitate glutamine uptake in excitatory neurons. The transport mechanism remains to be elucidated.</text>
</comment>
<comment type="catalytic activity">
    <reaction evidence="5">
        <text>L-glutamine(out) = L-glutamine(in)</text>
        <dbReference type="Rhea" id="RHEA:73419"/>
        <dbReference type="ChEBI" id="CHEBI:58359"/>
    </reaction>
</comment>
<comment type="catalytic activity">
    <reaction evidence="5">
        <text>L-glutamate(out) = L-glutamate(in)</text>
        <dbReference type="Rhea" id="RHEA:66336"/>
        <dbReference type="ChEBI" id="CHEBI:29985"/>
    </reaction>
</comment>
<comment type="subcellular location">
    <subcellularLocation>
        <location evidence="4">Cell membrane</location>
        <topology evidence="2">Multi-pass membrane protein</topology>
    </subcellularLocation>
    <subcellularLocation>
        <location>Synapse</location>
    </subcellularLocation>
    <text evidence="4">Colocalizes with synaptotagmins and SNAP25.</text>
</comment>
<comment type="tissue specificity">
    <text evidence="4">Expressed exclusively in neurons and not in astrocytes and glia cells. Highly expressed in the synapse. Highly expressed in glutamatergic neurons. Primarily expressed in excitatory neurons, with some minor expression in inhibitory neurons.</text>
</comment>
<comment type="similarity">
    <text evidence="7">Belongs to the amino acid/polyamine transporter 2 family.</text>
</comment>
<organism>
    <name type="scientific">Mus musculus</name>
    <name type="common">Mouse</name>
    <dbReference type="NCBI Taxonomy" id="10090"/>
    <lineage>
        <taxon>Eukaryota</taxon>
        <taxon>Metazoa</taxon>
        <taxon>Chordata</taxon>
        <taxon>Craniata</taxon>
        <taxon>Vertebrata</taxon>
        <taxon>Euteleostomi</taxon>
        <taxon>Mammalia</taxon>
        <taxon>Eutheria</taxon>
        <taxon>Euarchontoglires</taxon>
        <taxon>Glires</taxon>
        <taxon>Rodentia</taxon>
        <taxon>Myomorpha</taxon>
        <taxon>Muroidea</taxon>
        <taxon>Muridae</taxon>
        <taxon>Murinae</taxon>
        <taxon>Mus</taxon>
        <taxon>Mus</taxon>
    </lineage>
</organism>
<gene>
    <name evidence="6 8" type="primary">Slc38a6</name>
    <name evidence="6" type="synonym">Snat6</name>
</gene>
<reference key="1">
    <citation type="journal article" date="2009" name="PLoS Biol.">
        <title>Lineage-specific biology revealed by a finished genome assembly of the mouse.</title>
        <authorList>
            <person name="Church D.M."/>
            <person name="Goodstadt L."/>
            <person name="Hillier L.W."/>
            <person name="Zody M.C."/>
            <person name="Goldstein S."/>
            <person name="She X."/>
            <person name="Bult C.J."/>
            <person name="Agarwala R."/>
            <person name="Cherry J.L."/>
            <person name="DiCuccio M."/>
            <person name="Hlavina W."/>
            <person name="Kapustin Y."/>
            <person name="Meric P."/>
            <person name="Maglott D."/>
            <person name="Birtle Z."/>
            <person name="Marques A.C."/>
            <person name="Graves T."/>
            <person name="Zhou S."/>
            <person name="Teague B."/>
            <person name="Potamousis K."/>
            <person name="Churas C."/>
            <person name="Place M."/>
            <person name="Herschleb J."/>
            <person name="Runnheim R."/>
            <person name="Forrest D."/>
            <person name="Amos-Landgraf J."/>
            <person name="Schwartz D.C."/>
            <person name="Cheng Z."/>
            <person name="Lindblad-Toh K."/>
            <person name="Eichler E.E."/>
            <person name="Ponting C.P."/>
        </authorList>
    </citation>
    <scope>NUCLEOTIDE SEQUENCE [LARGE SCALE GENOMIC DNA]</scope>
    <source>
        <strain>C57BL/6J</strain>
    </source>
</reference>
<reference key="2">
    <citation type="submission" date="2005-09" db="EMBL/GenBank/DDBJ databases">
        <authorList>
            <person name="Mural R.J."/>
            <person name="Adams M.D."/>
            <person name="Myers E.W."/>
            <person name="Smith H.O."/>
            <person name="Venter J.C."/>
        </authorList>
    </citation>
    <scope>NUCLEOTIDE SEQUENCE [LARGE SCALE GENOMIC DNA]</scope>
</reference>
<reference key="3">
    <citation type="journal article" date="2004" name="Genome Res.">
        <title>The status, quality, and expansion of the NIH full-length cDNA project: the Mammalian Gene Collection (MGC).</title>
        <authorList>
            <consortium name="The MGC Project Team"/>
        </authorList>
    </citation>
    <scope>NUCLEOTIDE SEQUENCE [LARGE SCALE MRNA]</scope>
    <source>
        <tissue>Brain</tissue>
    </source>
</reference>
<reference key="4">
    <citation type="journal article" date="2010" name="Cell">
        <title>A tissue-specific atlas of mouse protein phosphorylation and expression.</title>
        <authorList>
            <person name="Huttlin E.L."/>
            <person name="Jedrychowski M.P."/>
            <person name="Elias J.E."/>
            <person name="Goswami T."/>
            <person name="Rad R."/>
            <person name="Beausoleil S.A."/>
            <person name="Villen J."/>
            <person name="Haas W."/>
            <person name="Sowa M.E."/>
            <person name="Gygi S.P."/>
        </authorList>
    </citation>
    <scope>PHOSPHORYLATION [LARGE SCALE ANALYSIS] AT SER-7</scope>
    <scope>IDENTIFICATION BY MASS SPECTROMETRY [LARGE SCALE ANALYSIS]</scope>
    <source>
        <tissue>Spleen</tissue>
    </source>
</reference>
<reference key="5">
    <citation type="journal article" date="2014" name="PLoS ONE">
        <title>Histological analysis of SLC38A6 (SNAT6) expression in mouse brain shows selective expression in excitatory neurons with high expression in the synapses.</title>
        <authorList>
            <person name="Bagchi S."/>
            <person name="Baomar H.A."/>
            <person name="Al-Walai S."/>
            <person name="Al-Sadi S."/>
            <person name="Fredriksson R."/>
        </authorList>
    </citation>
    <scope>SUBCELLULAR LOCATION</scope>
    <scope>TISSUE SPECIFICITY</scope>
</reference>
<reference key="6">
    <citation type="journal article" date="2021" name="Int. J. Mol. Sci.">
        <title>Glutamine Uptake via SNAT6 and Caveolin Regulates Glutamine-Glutamate Cycle.</title>
        <authorList>
            <person name="Gandasi N.R."/>
            <person name="Arapi V."/>
            <person name="Mickael M.E."/>
            <person name="Belekar P.A."/>
            <person name="Granlund L."/>
            <person name="Kothegala L."/>
            <person name="Fredriksson R."/>
            <person name="Bagchi S."/>
        </authorList>
    </citation>
    <scope>FUNCTION</scope>
    <scope>TRANSPORTER ACTIVITY</scope>
</reference>